<sequence length="141" mass="16179">MYRIGELAKMAEVTPDTIRYYEKQQMMEHEVRTEGGFRLYTESDLQRLKFIRHARQLGFSLESIRELLSIRIDPEHHTCQESKGIVQERLQEVEARIAELQSMQRSLQRLNDACCGTAHSSVYCSILEALEQGASGVKSGC</sequence>
<gene>
    <name type="primary">zntR</name>
    <name type="ordered locus">Z4662</name>
    <name type="ordered locus">ECs4157</name>
</gene>
<reference key="1">
    <citation type="journal article" date="2001" name="Nature">
        <title>Genome sequence of enterohaemorrhagic Escherichia coli O157:H7.</title>
        <authorList>
            <person name="Perna N.T."/>
            <person name="Plunkett G. III"/>
            <person name="Burland V."/>
            <person name="Mau B."/>
            <person name="Glasner J.D."/>
            <person name="Rose D.J."/>
            <person name="Mayhew G.F."/>
            <person name="Evans P.S."/>
            <person name="Gregor J."/>
            <person name="Kirkpatrick H.A."/>
            <person name="Posfai G."/>
            <person name="Hackett J."/>
            <person name="Klink S."/>
            <person name="Boutin A."/>
            <person name="Shao Y."/>
            <person name="Miller L."/>
            <person name="Grotbeck E.J."/>
            <person name="Davis N.W."/>
            <person name="Lim A."/>
            <person name="Dimalanta E.T."/>
            <person name="Potamousis K."/>
            <person name="Apodaca J."/>
            <person name="Anantharaman T.S."/>
            <person name="Lin J."/>
            <person name="Yen G."/>
            <person name="Schwartz D.C."/>
            <person name="Welch R.A."/>
            <person name="Blattner F.R."/>
        </authorList>
    </citation>
    <scope>NUCLEOTIDE SEQUENCE [LARGE SCALE GENOMIC DNA]</scope>
    <source>
        <strain>O157:H7 / EDL933 / ATCC 700927 / EHEC</strain>
    </source>
</reference>
<reference key="2">
    <citation type="journal article" date="2001" name="DNA Res.">
        <title>Complete genome sequence of enterohemorrhagic Escherichia coli O157:H7 and genomic comparison with a laboratory strain K-12.</title>
        <authorList>
            <person name="Hayashi T."/>
            <person name="Makino K."/>
            <person name="Ohnishi M."/>
            <person name="Kurokawa K."/>
            <person name="Ishii K."/>
            <person name="Yokoyama K."/>
            <person name="Han C.-G."/>
            <person name="Ohtsubo E."/>
            <person name="Nakayama K."/>
            <person name="Murata T."/>
            <person name="Tanaka M."/>
            <person name="Tobe T."/>
            <person name="Iida T."/>
            <person name="Takami H."/>
            <person name="Honda T."/>
            <person name="Sasakawa C."/>
            <person name="Ogasawara N."/>
            <person name="Yasunaga T."/>
            <person name="Kuhara S."/>
            <person name="Shiba T."/>
            <person name="Hattori M."/>
            <person name="Shinagawa H."/>
        </authorList>
    </citation>
    <scope>NUCLEOTIDE SEQUENCE [LARGE SCALE GENOMIC DNA]</scope>
    <source>
        <strain>O157:H7 / Sakai / RIMD 0509952 / EHEC</strain>
    </source>
</reference>
<accession>P0ACS6</accession>
<accession>P36676</accession>
<organism>
    <name type="scientific">Escherichia coli O157:H7</name>
    <dbReference type="NCBI Taxonomy" id="83334"/>
    <lineage>
        <taxon>Bacteria</taxon>
        <taxon>Pseudomonadati</taxon>
        <taxon>Pseudomonadota</taxon>
        <taxon>Gammaproteobacteria</taxon>
        <taxon>Enterobacterales</taxon>
        <taxon>Enterobacteriaceae</taxon>
        <taxon>Escherichia</taxon>
    </lineage>
</organism>
<comment type="function">
    <text evidence="1">Zinc-responsive transcriptional regulator of zntA.</text>
</comment>
<comment type="subunit">
    <text evidence="1">Homodimer.</text>
</comment>
<dbReference type="EMBL" id="AE005174">
    <property type="protein sequence ID" value="AAG58413.2"/>
    <property type="molecule type" value="Genomic_DNA"/>
</dbReference>
<dbReference type="EMBL" id="BA000007">
    <property type="protein sequence ID" value="BAB37580.1"/>
    <property type="molecule type" value="Genomic_DNA"/>
</dbReference>
<dbReference type="PIR" id="E91148">
    <property type="entry name" value="E91148"/>
</dbReference>
<dbReference type="RefSeq" id="NP_312184.1">
    <property type="nucleotide sequence ID" value="NC_002695.1"/>
</dbReference>
<dbReference type="RefSeq" id="WP_000285607.1">
    <property type="nucleotide sequence ID" value="NZ_VOAI01000041.1"/>
</dbReference>
<dbReference type="SMR" id="P0ACS6"/>
<dbReference type="STRING" id="155864.Z4662"/>
<dbReference type="GeneID" id="915990"/>
<dbReference type="GeneID" id="93778695"/>
<dbReference type="KEGG" id="ece:Z4662"/>
<dbReference type="KEGG" id="ecs:ECs_4157"/>
<dbReference type="PATRIC" id="fig|386585.9.peg.4340"/>
<dbReference type="eggNOG" id="COG0789">
    <property type="taxonomic scope" value="Bacteria"/>
</dbReference>
<dbReference type="HOGENOM" id="CLU_060077_2_0_6"/>
<dbReference type="OMA" id="HTCEESK"/>
<dbReference type="Proteomes" id="UP000000558">
    <property type="component" value="Chromosome"/>
</dbReference>
<dbReference type="Proteomes" id="UP000002519">
    <property type="component" value="Chromosome"/>
</dbReference>
<dbReference type="GO" id="GO:0003677">
    <property type="term" value="F:DNA binding"/>
    <property type="evidence" value="ECO:0007669"/>
    <property type="project" value="UniProtKB-KW"/>
</dbReference>
<dbReference type="GO" id="GO:0003700">
    <property type="term" value="F:DNA-binding transcription factor activity"/>
    <property type="evidence" value="ECO:0007669"/>
    <property type="project" value="InterPro"/>
</dbReference>
<dbReference type="GO" id="GO:0008270">
    <property type="term" value="F:zinc ion binding"/>
    <property type="evidence" value="ECO:0007669"/>
    <property type="project" value="InterPro"/>
</dbReference>
<dbReference type="GO" id="GO:0006351">
    <property type="term" value="P:DNA-templated transcription"/>
    <property type="evidence" value="ECO:0007669"/>
    <property type="project" value="InterPro"/>
</dbReference>
<dbReference type="CDD" id="cd04770">
    <property type="entry name" value="HTH_HMRTR"/>
    <property type="match status" value="1"/>
</dbReference>
<dbReference type="FunFam" id="1.10.1660.10:FF:000004">
    <property type="entry name" value="Zn(II)-responsive transcriptional regulator"/>
    <property type="match status" value="1"/>
</dbReference>
<dbReference type="Gene3D" id="1.10.1660.10">
    <property type="match status" value="1"/>
</dbReference>
<dbReference type="InterPro" id="IPR009061">
    <property type="entry name" value="DNA-bd_dom_put_sf"/>
</dbReference>
<dbReference type="InterPro" id="IPR000551">
    <property type="entry name" value="MerR-type_HTH_dom"/>
</dbReference>
<dbReference type="InterPro" id="IPR047057">
    <property type="entry name" value="MerR_fam"/>
</dbReference>
<dbReference type="InterPro" id="IPR011788">
    <property type="entry name" value="ZntR"/>
</dbReference>
<dbReference type="NCBIfam" id="NF007069">
    <property type="entry name" value="PRK09514.1"/>
    <property type="match status" value="1"/>
</dbReference>
<dbReference type="NCBIfam" id="TIGR02043">
    <property type="entry name" value="ZntR"/>
    <property type="match status" value="1"/>
</dbReference>
<dbReference type="PANTHER" id="PTHR30204:SF92">
    <property type="entry name" value="HTH-TYPE TRANSCRIPTIONAL REGULATOR ZNTR"/>
    <property type="match status" value="1"/>
</dbReference>
<dbReference type="PANTHER" id="PTHR30204">
    <property type="entry name" value="REDOX-CYCLING DRUG-SENSING TRANSCRIPTIONAL ACTIVATOR SOXR"/>
    <property type="match status" value="1"/>
</dbReference>
<dbReference type="Pfam" id="PF13411">
    <property type="entry name" value="MerR_1"/>
    <property type="match status" value="1"/>
</dbReference>
<dbReference type="PRINTS" id="PR00040">
    <property type="entry name" value="HTHMERR"/>
</dbReference>
<dbReference type="SMART" id="SM00422">
    <property type="entry name" value="HTH_MERR"/>
    <property type="match status" value="1"/>
</dbReference>
<dbReference type="SUPFAM" id="SSF46955">
    <property type="entry name" value="Putative DNA-binding domain"/>
    <property type="match status" value="1"/>
</dbReference>
<dbReference type="PROSITE" id="PS00552">
    <property type="entry name" value="HTH_MERR_1"/>
    <property type="match status" value="1"/>
</dbReference>
<dbReference type="PROSITE" id="PS50937">
    <property type="entry name" value="HTH_MERR_2"/>
    <property type="match status" value="1"/>
</dbReference>
<evidence type="ECO:0000250" key="1"/>
<evidence type="ECO:0000255" key="2">
    <source>
        <dbReference type="PROSITE-ProRule" id="PRU00254"/>
    </source>
</evidence>
<keyword id="KW-0238">DNA-binding</keyword>
<keyword id="KW-0479">Metal-binding</keyword>
<keyword id="KW-1185">Reference proteome</keyword>
<keyword id="KW-0804">Transcription</keyword>
<keyword id="KW-0805">Transcription regulation</keyword>
<keyword id="KW-0862">Zinc</keyword>
<proteinExistence type="inferred from homology"/>
<feature type="chain" id="PRO_0000098161" description="HTH-type transcriptional regulator ZntR">
    <location>
        <begin position="1"/>
        <end position="141"/>
    </location>
</feature>
<feature type="domain" description="HTH merR-type" evidence="2">
    <location>
        <begin position="1"/>
        <end position="70"/>
    </location>
</feature>
<feature type="DNA-binding region" description="H-T-H motif" evidence="2">
    <location>
        <begin position="4"/>
        <end position="23"/>
    </location>
</feature>
<feature type="binding site" evidence="1">
    <location>
        <position position="114"/>
    </location>
    <ligand>
        <name>Zn(2+)</name>
        <dbReference type="ChEBI" id="CHEBI:29105"/>
    </ligand>
</feature>
<feature type="binding site" evidence="1">
    <location>
        <position position="115"/>
    </location>
    <ligand>
        <name>Zn(2+)</name>
        <dbReference type="ChEBI" id="CHEBI:29105"/>
    </ligand>
</feature>
<feature type="binding site" evidence="1">
    <location>
        <position position="119"/>
    </location>
    <ligand>
        <name>Zn(2+)</name>
        <dbReference type="ChEBI" id="CHEBI:29105"/>
    </ligand>
</feature>
<feature type="binding site" evidence="1">
    <location>
        <position position="124"/>
    </location>
    <ligand>
        <name>Zn(2+)</name>
        <dbReference type="ChEBI" id="CHEBI:29105"/>
    </ligand>
</feature>
<name>ZNTR_ECO57</name>
<protein>
    <recommendedName>
        <fullName>HTH-type transcriptional regulator ZntR</fullName>
    </recommendedName>
    <alternativeName>
        <fullName>Zn(II)-responsive regulator of zntA</fullName>
    </alternativeName>
</protein>